<protein>
    <recommendedName>
        <fullName>UPF0758 protein HSM_0009</fullName>
    </recommendedName>
</protein>
<evidence type="ECO:0000255" key="1">
    <source>
        <dbReference type="PROSITE-ProRule" id="PRU01182"/>
    </source>
</evidence>
<evidence type="ECO:0000305" key="2"/>
<dbReference type="EMBL" id="CP000947">
    <property type="protein sequence ID" value="ACA32578.1"/>
    <property type="molecule type" value="Genomic_DNA"/>
</dbReference>
<dbReference type="RefSeq" id="WP_011608296.1">
    <property type="nucleotide sequence ID" value="NC_010519.1"/>
</dbReference>
<dbReference type="SMR" id="B0UUW7"/>
<dbReference type="STRING" id="228400.HSM_0009"/>
<dbReference type="GeneID" id="31486284"/>
<dbReference type="KEGG" id="hsm:HSM_0009"/>
<dbReference type="HOGENOM" id="CLU_073529_0_1_6"/>
<dbReference type="GO" id="GO:0046872">
    <property type="term" value="F:metal ion binding"/>
    <property type="evidence" value="ECO:0007669"/>
    <property type="project" value="UniProtKB-KW"/>
</dbReference>
<dbReference type="GO" id="GO:0008237">
    <property type="term" value="F:metallopeptidase activity"/>
    <property type="evidence" value="ECO:0007669"/>
    <property type="project" value="UniProtKB-KW"/>
</dbReference>
<dbReference type="GO" id="GO:0006508">
    <property type="term" value="P:proteolysis"/>
    <property type="evidence" value="ECO:0007669"/>
    <property type="project" value="UniProtKB-KW"/>
</dbReference>
<dbReference type="CDD" id="cd08071">
    <property type="entry name" value="MPN_DUF2466"/>
    <property type="match status" value="1"/>
</dbReference>
<dbReference type="Gene3D" id="3.40.140.10">
    <property type="entry name" value="Cytidine Deaminase, domain 2"/>
    <property type="match status" value="1"/>
</dbReference>
<dbReference type="InterPro" id="IPR037518">
    <property type="entry name" value="MPN"/>
</dbReference>
<dbReference type="InterPro" id="IPR025657">
    <property type="entry name" value="RadC_JAB"/>
</dbReference>
<dbReference type="InterPro" id="IPR010994">
    <property type="entry name" value="RuvA_2-like"/>
</dbReference>
<dbReference type="InterPro" id="IPR001405">
    <property type="entry name" value="UPF0758"/>
</dbReference>
<dbReference type="InterPro" id="IPR020891">
    <property type="entry name" value="UPF0758_CS"/>
</dbReference>
<dbReference type="InterPro" id="IPR046778">
    <property type="entry name" value="UPF0758_N"/>
</dbReference>
<dbReference type="NCBIfam" id="NF000642">
    <property type="entry name" value="PRK00024.1"/>
    <property type="match status" value="1"/>
</dbReference>
<dbReference type="NCBIfam" id="TIGR00608">
    <property type="entry name" value="radc"/>
    <property type="match status" value="1"/>
</dbReference>
<dbReference type="PANTHER" id="PTHR30471">
    <property type="entry name" value="DNA REPAIR PROTEIN RADC"/>
    <property type="match status" value="1"/>
</dbReference>
<dbReference type="PANTHER" id="PTHR30471:SF3">
    <property type="entry name" value="UPF0758 PROTEIN YEES-RELATED"/>
    <property type="match status" value="1"/>
</dbReference>
<dbReference type="Pfam" id="PF04002">
    <property type="entry name" value="RadC"/>
    <property type="match status" value="1"/>
</dbReference>
<dbReference type="Pfam" id="PF20582">
    <property type="entry name" value="UPF0758_N"/>
    <property type="match status" value="1"/>
</dbReference>
<dbReference type="SUPFAM" id="SSF47781">
    <property type="entry name" value="RuvA domain 2-like"/>
    <property type="match status" value="1"/>
</dbReference>
<dbReference type="PROSITE" id="PS50249">
    <property type="entry name" value="MPN"/>
    <property type="match status" value="1"/>
</dbReference>
<dbReference type="PROSITE" id="PS01302">
    <property type="entry name" value="UPF0758"/>
    <property type="match status" value="1"/>
</dbReference>
<proteinExistence type="inferred from homology"/>
<gene>
    <name type="ordered locus">HSM_0009</name>
</gene>
<sequence length="222" mass="25554">MTQQNTTLMPREKLLKYGASSLDDKELLAIFLRTGIKNCPVMQLSELVLAHFSSLRGLINADQKHFCQMKGLGITQFVQLQACTEMTKRYLLQELQFAQEFTSPDTVRMYLQTELENKDREIFMVLFLDNQHRLIKKEEMFLGTINQANVYPREIIKTALFCNAAALILAHNHPSGVSTPSMADRKMTENIKQLSELMEIRVLDHFIIGKGNYFSFAEQGWI</sequence>
<feature type="chain" id="PRO_1000074145" description="UPF0758 protein HSM_0009">
    <location>
        <begin position="1"/>
        <end position="222"/>
    </location>
</feature>
<feature type="domain" description="MPN" evidence="1">
    <location>
        <begin position="99"/>
        <end position="222"/>
    </location>
</feature>
<feature type="short sequence motif" description="JAMM motif" evidence="1">
    <location>
        <begin position="171"/>
        <end position="184"/>
    </location>
</feature>
<feature type="binding site" evidence="1">
    <location>
        <position position="171"/>
    </location>
    <ligand>
        <name>Zn(2+)</name>
        <dbReference type="ChEBI" id="CHEBI:29105"/>
        <note>catalytic</note>
    </ligand>
</feature>
<feature type="binding site" evidence="1">
    <location>
        <position position="173"/>
    </location>
    <ligand>
        <name>Zn(2+)</name>
        <dbReference type="ChEBI" id="CHEBI:29105"/>
        <note>catalytic</note>
    </ligand>
</feature>
<feature type="binding site" evidence="1">
    <location>
        <position position="184"/>
    </location>
    <ligand>
        <name>Zn(2+)</name>
        <dbReference type="ChEBI" id="CHEBI:29105"/>
        <note>catalytic</note>
    </ligand>
</feature>
<keyword id="KW-0378">Hydrolase</keyword>
<keyword id="KW-0479">Metal-binding</keyword>
<keyword id="KW-0482">Metalloprotease</keyword>
<keyword id="KW-0645">Protease</keyword>
<keyword id="KW-0862">Zinc</keyword>
<name>Y009_HISS2</name>
<comment type="similarity">
    <text evidence="2">Belongs to the UPF0758 family.</text>
</comment>
<reference key="1">
    <citation type="submission" date="2008-02" db="EMBL/GenBank/DDBJ databases">
        <title>Complete sequence of Haemophilus somnus 2336.</title>
        <authorList>
            <consortium name="US DOE Joint Genome Institute"/>
            <person name="Siddaramappa S."/>
            <person name="Duncan A.J."/>
            <person name="Challacombe J.F."/>
            <person name="Rainey D."/>
            <person name="Gillaspy A.F."/>
            <person name="Carson M."/>
            <person name="Gipson J."/>
            <person name="Gipson M."/>
            <person name="Bruce D."/>
            <person name="Detter J.C."/>
            <person name="Han C.S."/>
            <person name="Land M."/>
            <person name="Tapia R."/>
            <person name="Thompson L.S."/>
            <person name="Orvis J."/>
            <person name="Zaitshik J."/>
            <person name="Barnes G."/>
            <person name="Brettin T.S."/>
            <person name="Dyer D.W."/>
            <person name="Inzana T.J."/>
        </authorList>
    </citation>
    <scope>NUCLEOTIDE SEQUENCE [LARGE SCALE GENOMIC DNA]</scope>
    <source>
        <strain>2336</strain>
    </source>
</reference>
<organism>
    <name type="scientific">Histophilus somni (strain 2336)</name>
    <name type="common">Haemophilus somnus</name>
    <dbReference type="NCBI Taxonomy" id="228400"/>
    <lineage>
        <taxon>Bacteria</taxon>
        <taxon>Pseudomonadati</taxon>
        <taxon>Pseudomonadota</taxon>
        <taxon>Gammaproteobacteria</taxon>
        <taxon>Pasteurellales</taxon>
        <taxon>Pasteurellaceae</taxon>
        <taxon>Histophilus</taxon>
    </lineage>
</organism>
<accession>B0UUW7</accession>